<comment type="function">
    <text evidence="1">Chaperone involved in the maturation of iron-sulfur cluster-containing proteins. Has a low intrinsic ATPase activity which is markedly stimulated by HscB.</text>
</comment>
<comment type="similarity">
    <text evidence="1">Belongs to the heat shock protein 70 family.</text>
</comment>
<reference key="1">
    <citation type="journal article" date="2008" name="Infect. Immun.">
        <title>Genomic comparison of virulent Rickettsia rickettsii Sheila Smith and avirulent Rickettsia rickettsii Iowa.</title>
        <authorList>
            <person name="Ellison D.W."/>
            <person name="Clark T.R."/>
            <person name="Sturdevant D.E."/>
            <person name="Virtaneva K."/>
            <person name="Porcella S.F."/>
            <person name="Hackstadt T."/>
        </authorList>
    </citation>
    <scope>NUCLEOTIDE SEQUENCE [LARGE SCALE GENOMIC DNA]</scope>
    <source>
        <strain>Iowa</strain>
    </source>
</reference>
<sequence>MQIIEIREPEQADFKPEQQIAVGIDFGTTNSLIAIAANRKVKVIKSIDDKELIPTTIDFTSNNFTIGNNKGLRSIKRLFGKTLKEILNTPALFSLVKDYLDVNSSELKLNFANKQLRVPEIAAEIFIYLKNQAEEQLKTNLTKAVITVPAHFNDAARGEVMLAAKIAGFEVLRLIAEPTAAAYAYGLNKNQKGCYLVYDLGGGTFDVSILNIQEGIFQVIATNGDNMLGGNDIDVVITQYLCNKFDLPNSIDTLQLAKKAKETLTYKDSFNNDNVSINKQTLEQLILPLVERTINIAQECLEQAGNPNIDGVILVGGATRTPLIKDELYKAFKIDILSDIDPDKAVVWGAALQAENLIAPHTNSLLIDVAPLSLGMELYGGIVEKIIMHNTPIPISVVKEFTTYVDNQTGIQFHILQGEREMAADCRSLARFELKGLPPMKAGYIRAEVTFSIDADGILSVSAYEKISNTSHAIEVKPNHGIDKTEIDIMLENAYKNAKIDYTTRLLQEAVIEAEAFIFSIERAIAEFTTLLSESEISIINSLLDNIKEAVHARDWILINNSIKEFKSKIKKSMDTKFNVIINDLLKGKNINQIK</sequence>
<gene>
    <name evidence="1" type="primary">hscA</name>
    <name type="ordered locus">RrIowa_0319</name>
</gene>
<name>HSCA_RICRO</name>
<dbReference type="EMBL" id="CP000766">
    <property type="protein sequence ID" value="ABY72223.1"/>
    <property type="molecule type" value="Genomic_DNA"/>
</dbReference>
<dbReference type="RefSeq" id="WP_012150479.1">
    <property type="nucleotide sequence ID" value="NC_010263.3"/>
</dbReference>
<dbReference type="SMR" id="B0BWJ7"/>
<dbReference type="GeneID" id="79937046"/>
<dbReference type="KEGG" id="rrj:RrIowa_0319"/>
<dbReference type="eggNOG" id="COG0443">
    <property type="taxonomic scope" value="Bacteria"/>
</dbReference>
<dbReference type="HOGENOM" id="CLU_005965_2_4_5"/>
<dbReference type="Proteomes" id="UP000000796">
    <property type="component" value="Chromosome"/>
</dbReference>
<dbReference type="GO" id="GO:0005524">
    <property type="term" value="F:ATP binding"/>
    <property type="evidence" value="ECO:0007669"/>
    <property type="project" value="UniProtKB-KW"/>
</dbReference>
<dbReference type="GO" id="GO:0016887">
    <property type="term" value="F:ATP hydrolysis activity"/>
    <property type="evidence" value="ECO:0007669"/>
    <property type="project" value="UniProtKB-UniRule"/>
</dbReference>
<dbReference type="GO" id="GO:0140662">
    <property type="term" value="F:ATP-dependent protein folding chaperone"/>
    <property type="evidence" value="ECO:0007669"/>
    <property type="project" value="InterPro"/>
</dbReference>
<dbReference type="GO" id="GO:0051082">
    <property type="term" value="F:unfolded protein binding"/>
    <property type="evidence" value="ECO:0007669"/>
    <property type="project" value="InterPro"/>
</dbReference>
<dbReference type="GO" id="GO:0016226">
    <property type="term" value="P:iron-sulfur cluster assembly"/>
    <property type="evidence" value="ECO:0007669"/>
    <property type="project" value="InterPro"/>
</dbReference>
<dbReference type="FunFam" id="1.20.1270.10:FF:000058">
    <property type="entry name" value="Chaperone protein HscA homolog"/>
    <property type="match status" value="1"/>
</dbReference>
<dbReference type="Gene3D" id="1.20.1270.10">
    <property type="match status" value="1"/>
</dbReference>
<dbReference type="Gene3D" id="3.30.420.40">
    <property type="match status" value="2"/>
</dbReference>
<dbReference type="Gene3D" id="3.90.640.10">
    <property type="entry name" value="Actin, Chain A, domain 4"/>
    <property type="match status" value="1"/>
</dbReference>
<dbReference type="Gene3D" id="2.60.34.10">
    <property type="entry name" value="Substrate Binding Domain Of DNAk, Chain A, domain 1"/>
    <property type="match status" value="1"/>
</dbReference>
<dbReference type="HAMAP" id="MF_00679">
    <property type="entry name" value="HscA"/>
    <property type="match status" value="1"/>
</dbReference>
<dbReference type="InterPro" id="IPR043129">
    <property type="entry name" value="ATPase_NBD"/>
</dbReference>
<dbReference type="InterPro" id="IPR018181">
    <property type="entry name" value="Heat_shock_70_CS"/>
</dbReference>
<dbReference type="InterPro" id="IPR029048">
    <property type="entry name" value="HSP70_C_sf"/>
</dbReference>
<dbReference type="InterPro" id="IPR029047">
    <property type="entry name" value="HSP70_peptide-bd_sf"/>
</dbReference>
<dbReference type="InterPro" id="IPR013126">
    <property type="entry name" value="Hsp_70_fam"/>
</dbReference>
<dbReference type="InterPro" id="IPR010236">
    <property type="entry name" value="ISC_FeS_clus_asmbl_HscA"/>
</dbReference>
<dbReference type="NCBIfam" id="NF002399">
    <property type="entry name" value="PRK01433.1"/>
    <property type="match status" value="1"/>
</dbReference>
<dbReference type="PANTHER" id="PTHR19375">
    <property type="entry name" value="HEAT SHOCK PROTEIN 70KDA"/>
    <property type="match status" value="1"/>
</dbReference>
<dbReference type="Pfam" id="PF00012">
    <property type="entry name" value="HSP70"/>
    <property type="match status" value="1"/>
</dbReference>
<dbReference type="PRINTS" id="PR00301">
    <property type="entry name" value="HEATSHOCK70"/>
</dbReference>
<dbReference type="SUPFAM" id="SSF53067">
    <property type="entry name" value="Actin-like ATPase domain"/>
    <property type="match status" value="2"/>
</dbReference>
<dbReference type="SUPFAM" id="SSF100934">
    <property type="entry name" value="Heat shock protein 70kD (HSP70), C-terminal subdomain"/>
    <property type="match status" value="1"/>
</dbReference>
<dbReference type="SUPFAM" id="SSF100920">
    <property type="entry name" value="Heat shock protein 70kD (HSP70), peptide-binding domain"/>
    <property type="match status" value="1"/>
</dbReference>
<dbReference type="PROSITE" id="PS00329">
    <property type="entry name" value="HSP70_2"/>
    <property type="match status" value="1"/>
</dbReference>
<organism>
    <name type="scientific">Rickettsia rickettsii (strain Iowa)</name>
    <dbReference type="NCBI Taxonomy" id="452659"/>
    <lineage>
        <taxon>Bacteria</taxon>
        <taxon>Pseudomonadati</taxon>
        <taxon>Pseudomonadota</taxon>
        <taxon>Alphaproteobacteria</taxon>
        <taxon>Rickettsiales</taxon>
        <taxon>Rickettsiaceae</taxon>
        <taxon>Rickettsieae</taxon>
        <taxon>Rickettsia</taxon>
        <taxon>spotted fever group</taxon>
    </lineage>
</organism>
<proteinExistence type="inferred from homology"/>
<evidence type="ECO:0000255" key="1">
    <source>
        <dbReference type="HAMAP-Rule" id="MF_00679"/>
    </source>
</evidence>
<feature type="chain" id="PRO_1000082984" description="Chaperone protein HscA homolog">
    <location>
        <begin position="1"/>
        <end position="595"/>
    </location>
</feature>
<keyword id="KW-0067">ATP-binding</keyword>
<keyword id="KW-0143">Chaperone</keyword>
<keyword id="KW-0547">Nucleotide-binding</keyword>
<protein>
    <recommendedName>
        <fullName evidence="1">Chaperone protein HscA homolog</fullName>
    </recommendedName>
</protein>
<accession>B0BWJ7</accession>